<gene>
    <name type="ordered locus">Pcryo_0542</name>
</gene>
<evidence type="ECO:0000255" key="1">
    <source>
        <dbReference type="HAMAP-Rule" id="MF_00652"/>
    </source>
</evidence>
<protein>
    <recommendedName>
        <fullName evidence="1">UPF0246 protein Pcryo_0542</fullName>
    </recommendedName>
</protein>
<feature type="chain" id="PRO_0000262045" description="UPF0246 protein Pcryo_0542">
    <location>
        <begin position="1"/>
        <end position="266"/>
    </location>
</feature>
<comment type="similarity">
    <text evidence="1">Belongs to the UPF0246 family.</text>
</comment>
<reference key="1">
    <citation type="submission" date="2006-03" db="EMBL/GenBank/DDBJ databases">
        <title>Complete sequence of chromosome of Psychrobacter cryohalolentis K5.</title>
        <authorList>
            <consortium name="US DOE Joint Genome Institute"/>
            <person name="Copeland A."/>
            <person name="Lucas S."/>
            <person name="Lapidus A."/>
            <person name="Barry K."/>
            <person name="Detter J.C."/>
            <person name="Glavina T."/>
            <person name="Hammon N."/>
            <person name="Israni S."/>
            <person name="Dalin E."/>
            <person name="Tice H."/>
            <person name="Pitluck S."/>
            <person name="Brettin T."/>
            <person name="Bruce D."/>
            <person name="Han C."/>
            <person name="Tapia R."/>
            <person name="Sims D.R."/>
            <person name="Gilna P."/>
            <person name="Schmutz J."/>
            <person name="Larimer F."/>
            <person name="Land M."/>
            <person name="Hauser L."/>
            <person name="Kyrpides N."/>
            <person name="Kim E."/>
            <person name="Richardson P."/>
        </authorList>
    </citation>
    <scope>NUCLEOTIDE SEQUENCE [LARGE SCALE GENOMIC DNA]</scope>
    <source>
        <strain>ATCC BAA-1226 / DSM 17306 / VKM B-2378 / K5</strain>
    </source>
</reference>
<accession>Q1QDC8</accession>
<dbReference type="EMBL" id="CP000323">
    <property type="protein sequence ID" value="ABE74325.1"/>
    <property type="molecule type" value="Genomic_DNA"/>
</dbReference>
<dbReference type="RefSeq" id="WP_011512894.1">
    <property type="nucleotide sequence ID" value="NC_007969.1"/>
</dbReference>
<dbReference type="SMR" id="Q1QDC8"/>
<dbReference type="STRING" id="335284.Pcryo_0542"/>
<dbReference type="KEGG" id="pcr:Pcryo_0542"/>
<dbReference type="eggNOG" id="COG3022">
    <property type="taxonomic scope" value="Bacteria"/>
</dbReference>
<dbReference type="HOGENOM" id="CLU_061989_0_0_6"/>
<dbReference type="Proteomes" id="UP000002425">
    <property type="component" value="Chromosome"/>
</dbReference>
<dbReference type="GO" id="GO:0005829">
    <property type="term" value="C:cytosol"/>
    <property type="evidence" value="ECO:0007669"/>
    <property type="project" value="TreeGrafter"/>
</dbReference>
<dbReference type="GO" id="GO:0033194">
    <property type="term" value="P:response to hydroperoxide"/>
    <property type="evidence" value="ECO:0007669"/>
    <property type="project" value="TreeGrafter"/>
</dbReference>
<dbReference type="HAMAP" id="MF_00652">
    <property type="entry name" value="UPF0246"/>
    <property type="match status" value="1"/>
</dbReference>
<dbReference type="InterPro" id="IPR005583">
    <property type="entry name" value="YaaA"/>
</dbReference>
<dbReference type="NCBIfam" id="NF002542">
    <property type="entry name" value="PRK02101.1-3"/>
    <property type="match status" value="1"/>
</dbReference>
<dbReference type="PANTHER" id="PTHR30283:SF4">
    <property type="entry name" value="PEROXIDE STRESS RESISTANCE PROTEIN YAAA"/>
    <property type="match status" value="1"/>
</dbReference>
<dbReference type="PANTHER" id="PTHR30283">
    <property type="entry name" value="PEROXIDE STRESS RESPONSE PROTEIN YAAA"/>
    <property type="match status" value="1"/>
</dbReference>
<dbReference type="Pfam" id="PF03883">
    <property type="entry name" value="H2O2_YaaD"/>
    <property type="match status" value="1"/>
</dbReference>
<organism>
    <name type="scientific">Psychrobacter cryohalolentis (strain ATCC BAA-1226 / DSM 17306 / VKM B-2378 / K5)</name>
    <dbReference type="NCBI Taxonomy" id="335284"/>
    <lineage>
        <taxon>Bacteria</taxon>
        <taxon>Pseudomonadati</taxon>
        <taxon>Pseudomonadota</taxon>
        <taxon>Gammaproteobacteria</taxon>
        <taxon>Moraxellales</taxon>
        <taxon>Moraxellaceae</taxon>
        <taxon>Psychrobacter</taxon>
    </lineage>
</organism>
<proteinExistence type="inferred from homology"/>
<sequence>MYFLLSPAKSLNETDTAPMDISSYYSQPELIEHSQALMKILKSKEPIDLQELMSISDDLSQLNAKRNQDWAWSDNELFTDDNAKPAGYLFDGDVYTGLDMYNMDKDTAIYVNEHLGILSGLYGVLKPLDFIQPYRLEMGTKLKNERGDNLYEFWGEEVTKIINKRMADSDDKVLINLASNEYFKAVKKKALNAEIITPRFEDEKNGQYKVISFYAKKARGLMVKYAADNKLTNAEQLKQFDLAGYYYCETASDDKTWTFRRDEVNQ</sequence>
<name>Y542_PSYCK</name>